<evidence type="ECO:0000255" key="1">
    <source>
        <dbReference type="HAMAP-Rule" id="MF_00656"/>
    </source>
</evidence>
<name>PQQA_COLP3</name>
<protein>
    <recommendedName>
        <fullName evidence="1">Coenzyme PQQ synthesis protein A</fullName>
    </recommendedName>
    <alternativeName>
        <fullName evidence="1">Pyrroloquinoline quinone biosynthesis protein A</fullName>
    </alternativeName>
</protein>
<comment type="function">
    <text evidence="1">Required for coenzyme pyrroloquinoline quinone (PQQ) biosynthesis. PQQ is probably formed by cross-linking a specific glutamate to a specific tyrosine residue and excising these residues from the peptide.</text>
</comment>
<comment type="pathway">
    <text evidence="1">Cofactor biosynthesis; pyrroloquinoline quinone biosynthesis.</text>
</comment>
<comment type="similarity">
    <text evidence="1">Belongs to the PqqA family.</text>
</comment>
<accession>Q488A4</accession>
<reference key="1">
    <citation type="journal article" date="2005" name="Proc. Natl. Acad. Sci. U.S.A.">
        <title>The psychrophilic lifestyle as revealed by the genome sequence of Colwellia psychrerythraea 34H through genomic and proteomic analyses.</title>
        <authorList>
            <person name="Methe B.A."/>
            <person name="Nelson K.E."/>
            <person name="Deming J.W."/>
            <person name="Momen B."/>
            <person name="Melamud E."/>
            <person name="Zhang X."/>
            <person name="Moult J."/>
            <person name="Madupu R."/>
            <person name="Nelson W.C."/>
            <person name="Dodson R.J."/>
            <person name="Brinkac L.M."/>
            <person name="Daugherty S.C."/>
            <person name="Durkin A.S."/>
            <person name="DeBoy R.T."/>
            <person name="Kolonay J.F."/>
            <person name="Sullivan S.A."/>
            <person name="Zhou L."/>
            <person name="Davidsen T.M."/>
            <person name="Wu M."/>
            <person name="Huston A.L."/>
            <person name="Lewis M."/>
            <person name="Weaver B."/>
            <person name="Weidman J.F."/>
            <person name="Khouri H."/>
            <person name="Utterback T.R."/>
            <person name="Feldblyum T.V."/>
            <person name="Fraser C.M."/>
        </authorList>
    </citation>
    <scope>NUCLEOTIDE SEQUENCE [LARGE SCALE GENOMIC DNA]</scope>
    <source>
        <strain>34H / ATCC BAA-681</strain>
    </source>
</reference>
<keyword id="KW-0884">PQQ biosynthesis</keyword>
<organism>
    <name type="scientific">Colwellia psychrerythraea (strain 34H / ATCC BAA-681)</name>
    <name type="common">Vibrio psychroerythus</name>
    <dbReference type="NCBI Taxonomy" id="167879"/>
    <lineage>
        <taxon>Bacteria</taxon>
        <taxon>Pseudomonadati</taxon>
        <taxon>Pseudomonadota</taxon>
        <taxon>Gammaproteobacteria</taxon>
        <taxon>Alteromonadales</taxon>
        <taxon>Colwelliaceae</taxon>
        <taxon>Colwellia</taxon>
    </lineage>
</organism>
<sequence>MWTKPKFEEMRLGFEVTLYISNR</sequence>
<gene>
    <name evidence="1" type="primary">pqqA</name>
    <name type="ordered locus">CPS_0862</name>
</gene>
<dbReference type="EMBL" id="CP000083">
    <property type="protein sequence ID" value="AAZ25436.1"/>
    <property type="molecule type" value="Genomic_DNA"/>
</dbReference>
<dbReference type="STRING" id="167879.CPS_0862"/>
<dbReference type="KEGG" id="cps:CPS_0862"/>
<dbReference type="HOGENOM" id="CLU_219131_1_0_6"/>
<dbReference type="UniPathway" id="UPA00539"/>
<dbReference type="Proteomes" id="UP000000547">
    <property type="component" value="Chromosome"/>
</dbReference>
<dbReference type="GO" id="GO:0018189">
    <property type="term" value="P:pyrroloquinoline quinone biosynthetic process"/>
    <property type="evidence" value="ECO:0007669"/>
    <property type="project" value="UniProtKB-UniRule"/>
</dbReference>
<dbReference type="HAMAP" id="MF_00656">
    <property type="entry name" value="PQQ_syn_PqqA"/>
    <property type="match status" value="1"/>
</dbReference>
<dbReference type="InterPro" id="IPR011725">
    <property type="entry name" value="PQQ_synth_PqqA"/>
</dbReference>
<dbReference type="NCBIfam" id="TIGR02107">
    <property type="entry name" value="PQQ_syn_pqqA"/>
    <property type="match status" value="1"/>
</dbReference>
<dbReference type="Pfam" id="PF08042">
    <property type="entry name" value="PqqA"/>
    <property type="match status" value="1"/>
</dbReference>
<proteinExistence type="inferred from homology"/>
<feature type="chain" id="PRO_1000082785" description="Coenzyme PQQ synthesis protein A">
    <location>
        <begin position="1"/>
        <end position="23"/>
    </location>
</feature>
<feature type="cross-link" description="Pyrroloquinoline quinone (Glu-Tyr)" evidence="1">
    <location>
        <begin position="15"/>
        <end position="19"/>
    </location>
</feature>